<feature type="chain" id="PRO_0000067830" description="DNA-directed RNA polymerase subunit beta'">
    <location>
        <begin position="1"/>
        <end position="1400"/>
    </location>
</feature>
<feature type="binding site" evidence="1">
    <location>
        <position position="70"/>
    </location>
    <ligand>
        <name>Zn(2+)</name>
        <dbReference type="ChEBI" id="CHEBI:29105"/>
        <label>1</label>
    </ligand>
</feature>
<feature type="binding site" evidence="1">
    <location>
        <position position="72"/>
    </location>
    <ligand>
        <name>Zn(2+)</name>
        <dbReference type="ChEBI" id="CHEBI:29105"/>
        <label>1</label>
    </ligand>
</feature>
<feature type="binding site" evidence="1">
    <location>
        <position position="85"/>
    </location>
    <ligand>
        <name>Zn(2+)</name>
        <dbReference type="ChEBI" id="CHEBI:29105"/>
        <label>1</label>
    </ligand>
</feature>
<feature type="binding site" evidence="1">
    <location>
        <position position="88"/>
    </location>
    <ligand>
        <name>Zn(2+)</name>
        <dbReference type="ChEBI" id="CHEBI:29105"/>
        <label>1</label>
    </ligand>
</feature>
<feature type="binding site" evidence="1">
    <location>
        <position position="460"/>
    </location>
    <ligand>
        <name>Mg(2+)</name>
        <dbReference type="ChEBI" id="CHEBI:18420"/>
    </ligand>
</feature>
<feature type="binding site" evidence="1">
    <location>
        <position position="462"/>
    </location>
    <ligand>
        <name>Mg(2+)</name>
        <dbReference type="ChEBI" id="CHEBI:18420"/>
    </ligand>
</feature>
<feature type="binding site" evidence="1">
    <location>
        <position position="464"/>
    </location>
    <ligand>
        <name>Mg(2+)</name>
        <dbReference type="ChEBI" id="CHEBI:18420"/>
    </ligand>
</feature>
<feature type="binding site" evidence="1">
    <location>
        <position position="814"/>
    </location>
    <ligand>
        <name>Zn(2+)</name>
        <dbReference type="ChEBI" id="CHEBI:29105"/>
        <label>2</label>
    </ligand>
</feature>
<feature type="binding site" evidence="1">
    <location>
        <position position="888"/>
    </location>
    <ligand>
        <name>Zn(2+)</name>
        <dbReference type="ChEBI" id="CHEBI:29105"/>
        <label>2</label>
    </ligand>
</feature>
<feature type="binding site" evidence="1">
    <location>
        <position position="895"/>
    </location>
    <ligand>
        <name>Zn(2+)</name>
        <dbReference type="ChEBI" id="CHEBI:29105"/>
        <label>2</label>
    </ligand>
</feature>
<feature type="binding site" evidence="1">
    <location>
        <position position="898"/>
    </location>
    <ligand>
        <name>Zn(2+)</name>
        <dbReference type="ChEBI" id="CHEBI:29105"/>
        <label>2</label>
    </ligand>
</feature>
<organism>
    <name type="scientific">Vibrio vulnificus (strain YJ016)</name>
    <dbReference type="NCBI Taxonomy" id="196600"/>
    <lineage>
        <taxon>Bacteria</taxon>
        <taxon>Pseudomonadati</taxon>
        <taxon>Pseudomonadota</taxon>
        <taxon>Gammaproteobacteria</taxon>
        <taxon>Vibrionales</taxon>
        <taxon>Vibrionaceae</taxon>
        <taxon>Vibrio</taxon>
    </lineage>
</organism>
<protein>
    <recommendedName>
        <fullName evidence="1">DNA-directed RNA polymerase subunit beta'</fullName>
        <shortName evidence="1">RNAP subunit beta'</shortName>
        <ecNumber evidence="1">2.7.7.6</ecNumber>
    </recommendedName>
    <alternativeName>
        <fullName evidence="1">RNA polymerase subunit beta'</fullName>
    </alternativeName>
    <alternativeName>
        <fullName evidence="1">Transcriptase subunit beta'</fullName>
    </alternativeName>
</protein>
<sequence length="1400" mass="154662">MKDLLNFLKAQHKTEEFDAIKIGLSSPDMIRSWSFGEVKKPETINYRTFKPERDGLFCARIFGPVKDYECLCGKYKRLKHRGVICEKCGVEVTQTKVRRDRMGHIELASPVAHIWFLKSLPSRIGLLMDIPLRDIERVLYFEMYVVTEPGMTDLEKSQMLTEEEYLDRLEEWGDEFTAKMGAEAIKDLLGSMDLHAEVEQMREELDTTNSETKRKKLTKRLKLVEAFISSGNNPEWMILTVLPVLPPDLRPLVPLDGGRFATSDLNDLYRRVINRNNRLKRLLELAAPDIIVRNEKRMLQESVDALLDNGRRGRAITGSNKRPLKSLADMIKGKQGRFRQNLLGKRVDYSGRSVITVGPYLRLHQCGLPKKMALELFKPFIYSKLETRGLATTIKAAKKMVEREEAVVWDILDEVIREHPVLLNRAPTLHRLGIQAFEPVLIEGKAIQLHPLVCAAYNADFDGDQMAVHVPLTLEAQLEARTLMMSTNNILSPASGDPIIVPSQDVVLGLYYMTREMINAKGEGMYLAGPAEAEKAYRTKTAALHARVKVRITETVVDEDGHSTTETKMVDTTIGRAMLWQIVPKGLPFSIVNQKLGKKQISNLLNEAYRKLGLKDTVIFADQIMYTGFAYAALSGVSVGIDDMVVPPAKYTEIAEAEEEVREIQEQYQSGLVTAGERYNKVIDIWASTNDRVAKAMMENLSSETVINRDGEEEQQESFNSIYMMADSGARGSAAQIRQLAGMRGLMARPDGSIIETPITANFKEGLNVLQYFISTHGARKGLADTALKTANSGYLTRRLVDVAQDVVVTEHDCGTLEGVEMMPHIEGGDVKVALTELALGRVVAEDIVKPGTEEILIPRNTLLDEKWCQIINDNSVDKITVRSVVTCDSDFGCCAQCYGRDLARGHLVNQGEAVGVIAAQSIGEPGTQLTMRTFHIGGAASTAAAENSVQVKNNGSVKLNNAKFVINKDGKLVITSRASELTIIDEFGRTKEKHKLPYGSSLSKADGDAVTAGETVANWEAHTMPIITEVAGRVQFVDMIDGVTVSRQTDDLTGLSSSEVTDAAARPAAGKDMRPAIKLVDAAGNDVMIPGTDMPAQYFLPGKAIVNIEDGAEVGIGDTLARIPQKSGGNKDITGGLPRVADLFEARKPKEPAILAEYSGTVSFGKETKGKRRLIITREGGETYEEMIPKHRQLNVFEGERVERGDVIADGPEAPHDILRLRGIHAVTQYIANEVQEVYRLQGVKINDKHIETIVRQMLRKCTITHAGDSEFLPGETVEYSQVKIANRNLEAEGKEPARFERELLGITKASLATESFISAASFQETTRVLTEAAVSGKRDDLRGLKENVIVGRLIPAGTGFAYHQDRQAKRAQEQEGPSAAQATDNLAALLNAGFSSDE</sequence>
<proteinExistence type="inferred from homology"/>
<evidence type="ECO:0000255" key="1">
    <source>
        <dbReference type="HAMAP-Rule" id="MF_01322"/>
    </source>
</evidence>
<comment type="function">
    <text evidence="1">DNA-dependent RNA polymerase catalyzes the transcription of DNA into RNA using the four ribonucleoside triphosphates as substrates.</text>
</comment>
<comment type="catalytic activity">
    <reaction evidence="1">
        <text>RNA(n) + a ribonucleoside 5'-triphosphate = RNA(n+1) + diphosphate</text>
        <dbReference type="Rhea" id="RHEA:21248"/>
        <dbReference type="Rhea" id="RHEA-COMP:14527"/>
        <dbReference type="Rhea" id="RHEA-COMP:17342"/>
        <dbReference type="ChEBI" id="CHEBI:33019"/>
        <dbReference type="ChEBI" id="CHEBI:61557"/>
        <dbReference type="ChEBI" id="CHEBI:140395"/>
        <dbReference type="EC" id="2.7.7.6"/>
    </reaction>
</comment>
<comment type="cofactor">
    <cofactor evidence="1">
        <name>Mg(2+)</name>
        <dbReference type="ChEBI" id="CHEBI:18420"/>
    </cofactor>
    <text evidence="1">Binds 1 Mg(2+) ion per subunit.</text>
</comment>
<comment type="cofactor">
    <cofactor evidence="1">
        <name>Zn(2+)</name>
        <dbReference type="ChEBI" id="CHEBI:29105"/>
    </cofactor>
    <text evidence="1">Binds 2 Zn(2+) ions per subunit.</text>
</comment>
<comment type="subunit">
    <text evidence="1">The RNAP catalytic core consists of 2 alpha, 1 beta, 1 beta' and 1 omega subunit. When a sigma factor is associated with the core the holoenzyme is formed, which can initiate transcription.</text>
</comment>
<comment type="similarity">
    <text evidence="1">Belongs to the RNA polymerase beta' chain family.</text>
</comment>
<name>RPOC_VIBVY</name>
<gene>
    <name evidence="1" type="primary">rpoC</name>
    <name type="ordered locus">VV3158</name>
</gene>
<keyword id="KW-0240">DNA-directed RNA polymerase</keyword>
<keyword id="KW-0460">Magnesium</keyword>
<keyword id="KW-0479">Metal-binding</keyword>
<keyword id="KW-0548">Nucleotidyltransferase</keyword>
<keyword id="KW-0804">Transcription</keyword>
<keyword id="KW-0808">Transferase</keyword>
<keyword id="KW-0862">Zinc</keyword>
<dbReference type="EC" id="2.7.7.6" evidence="1"/>
<dbReference type="EMBL" id="BA000037">
    <property type="protein sequence ID" value="BAC95921.1"/>
    <property type="molecule type" value="Genomic_DNA"/>
</dbReference>
<dbReference type="RefSeq" id="WP_011079202.1">
    <property type="nucleotide sequence ID" value="NC_005139.1"/>
</dbReference>
<dbReference type="SMR" id="Q7MGS0"/>
<dbReference type="STRING" id="672.VV93_v1c28750"/>
<dbReference type="KEGG" id="vvy:VV3158"/>
<dbReference type="eggNOG" id="COG0086">
    <property type="taxonomic scope" value="Bacteria"/>
</dbReference>
<dbReference type="HOGENOM" id="CLU_000524_3_1_6"/>
<dbReference type="Proteomes" id="UP000002675">
    <property type="component" value="Chromosome I"/>
</dbReference>
<dbReference type="GO" id="GO:0000428">
    <property type="term" value="C:DNA-directed RNA polymerase complex"/>
    <property type="evidence" value="ECO:0007669"/>
    <property type="project" value="UniProtKB-KW"/>
</dbReference>
<dbReference type="GO" id="GO:0003677">
    <property type="term" value="F:DNA binding"/>
    <property type="evidence" value="ECO:0007669"/>
    <property type="project" value="UniProtKB-UniRule"/>
</dbReference>
<dbReference type="GO" id="GO:0003899">
    <property type="term" value="F:DNA-directed RNA polymerase activity"/>
    <property type="evidence" value="ECO:0007669"/>
    <property type="project" value="UniProtKB-UniRule"/>
</dbReference>
<dbReference type="GO" id="GO:0000287">
    <property type="term" value="F:magnesium ion binding"/>
    <property type="evidence" value="ECO:0007669"/>
    <property type="project" value="UniProtKB-UniRule"/>
</dbReference>
<dbReference type="GO" id="GO:0008270">
    <property type="term" value="F:zinc ion binding"/>
    <property type="evidence" value="ECO:0007669"/>
    <property type="project" value="UniProtKB-UniRule"/>
</dbReference>
<dbReference type="GO" id="GO:0006351">
    <property type="term" value="P:DNA-templated transcription"/>
    <property type="evidence" value="ECO:0007669"/>
    <property type="project" value="UniProtKB-UniRule"/>
</dbReference>
<dbReference type="CDD" id="cd02655">
    <property type="entry name" value="RNAP_beta'_C"/>
    <property type="match status" value="1"/>
</dbReference>
<dbReference type="CDD" id="cd01609">
    <property type="entry name" value="RNAP_beta'_N"/>
    <property type="match status" value="1"/>
</dbReference>
<dbReference type="FunFam" id="1.10.132.30:FF:000003">
    <property type="entry name" value="DNA-directed RNA polymerase subunit beta"/>
    <property type="match status" value="1"/>
</dbReference>
<dbReference type="FunFam" id="1.10.150.390:FF:000002">
    <property type="entry name" value="DNA-directed RNA polymerase subunit beta"/>
    <property type="match status" value="1"/>
</dbReference>
<dbReference type="FunFam" id="1.10.40.90:FF:000001">
    <property type="entry name" value="DNA-directed RNA polymerase subunit beta"/>
    <property type="match status" value="1"/>
</dbReference>
<dbReference type="FunFam" id="2.40.50.100:FF:000016">
    <property type="entry name" value="DNA-directed RNA polymerase subunit beta"/>
    <property type="match status" value="1"/>
</dbReference>
<dbReference type="FunFam" id="4.10.860.120:FF:000001">
    <property type="entry name" value="DNA-directed RNA polymerase subunit beta"/>
    <property type="match status" value="1"/>
</dbReference>
<dbReference type="Gene3D" id="1.10.132.30">
    <property type="match status" value="1"/>
</dbReference>
<dbReference type="Gene3D" id="1.10.150.390">
    <property type="match status" value="1"/>
</dbReference>
<dbReference type="Gene3D" id="1.10.1790.20">
    <property type="match status" value="1"/>
</dbReference>
<dbReference type="Gene3D" id="1.10.40.90">
    <property type="match status" value="1"/>
</dbReference>
<dbReference type="Gene3D" id="2.40.40.20">
    <property type="match status" value="1"/>
</dbReference>
<dbReference type="Gene3D" id="2.40.50.100">
    <property type="match status" value="3"/>
</dbReference>
<dbReference type="Gene3D" id="4.10.860.120">
    <property type="entry name" value="RNA polymerase II, clamp domain"/>
    <property type="match status" value="1"/>
</dbReference>
<dbReference type="Gene3D" id="1.10.274.100">
    <property type="entry name" value="RNA polymerase Rpb1, domain 3"/>
    <property type="match status" value="1"/>
</dbReference>
<dbReference type="HAMAP" id="MF_01322">
    <property type="entry name" value="RNApol_bact_RpoC"/>
    <property type="match status" value="1"/>
</dbReference>
<dbReference type="InterPro" id="IPR045867">
    <property type="entry name" value="DNA-dir_RpoC_beta_prime"/>
</dbReference>
<dbReference type="InterPro" id="IPR012754">
    <property type="entry name" value="DNA-dir_RpoC_beta_prime_bact"/>
</dbReference>
<dbReference type="InterPro" id="IPR000722">
    <property type="entry name" value="RNA_pol_asu"/>
</dbReference>
<dbReference type="InterPro" id="IPR006592">
    <property type="entry name" value="RNA_pol_N"/>
</dbReference>
<dbReference type="InterPro" id="IPR007080">
    <property type="entry name" value="RNA_pol_Rpb1_1"/>
</dbReference>
<dbReference type="InterPro" id="IPR007066">
    <property type="entry name" value="RNA_pol_Rpb1_3"/>
</dbReference>
<dbReference type="InterPro" id="IPR042102">
    <property type="entry name" value="RNA_pol_Rpb1_3_sf"/>
</dbReference>
<dbReference type="InterPro" id="IPR007083">
    <property type="entry name" value="RNA_pol_Rpb1_4"/>
</dbReference>
<dbReference type="InterPro" id="IPR007081">
    <property type="entry name" value="RNA_pol_Rpb1_5"/>
</dbReference>
<dbReference type="InterPro" id="IPR044893">
    <property type="entry name" value="RNA_pol_Rpb1_clamp_domain"/>
</dbReference>
<dbReference type="InterPro" id="IPR038120">
    <property type="entry name" value="Rpb1_funnel_sf"/>
</dbReference>
<dbReference type="NCBIfam" id="TIGR02386">
    <property type="entry name" value="rpoC_TIGR"/>
    <property type="match status" value="1"/>
</dbReference>
<dbReference type="PANTHER" id="PTHR19376">
    <property type="entry name" value="DNA-DIRECTED RNA POLYMERASE"/>
    <property type="match status" value="1"/>
</dbReference>
<dbReference type="PANTHER" id="PTHR19376:SF54">
    <property type="entry name" value="DNA-DIRECTED RNA POLYMERASE SUBUNIT BETA"/>
    <property type="match status" value="1"/>
</dbReference>
<dbReference type="Pfam" id="PF04997">
    <property type="entry name" value="RNA_pol_Rpb1_1"/>
    <property type="match status" value="1"/>
</dbReference>
<dbReference type="Pfam" id="PF00623">
    <property type="entry name" value="RNA_pol_Rpb1_2"/>
    <property type="match status" value="2"/>
</dbReference>
<dbReference type="Pfam" id="PF04983">
    <property type="entry name" value="RNA_pol_Rpb1_3"/>
    <property type="match status" value="1"/>
</dbReference>
<dbReference type="Pfam" id="PF05000">
    <property type="entry name" value="RNA_pol_Rpb1_4"/>
    <property type="match status" value="1"/>
</dbReference>
<dbReference type="Pfam" id="PF04998">
    <property type="entry name" value="RNA_pol_Rpb1_5"/>
    <property type="match status" value="1"/>
</dbReference>
<dbReference type="SMART" id="SM00663">
    <property type="entry name" value="RPOLA_N"/>
    <property type="match status" value="1"/>
</dbReference>
<dbReference type="SUPFAM" id="SSF64484">
    <property type="entry name" value="beta and beta-prime subunits of DNA dependent RNA-polymerase"/>
    <property type="match status" value="1"/>
</dbReference>
<accession>Q7MGS0</accession>
<reference key="1">
    <citation type="journal article" date="2003" name="Genome Res.">
        <title>Comparative genome analysis of Vibrio vulnificus, a marine pathogen.</title>
        <authorList>
            <person name="Chen C.-Y."/>
            <person name="Wu K.-M."/>
            <person name="Chang Y.-C."/>
            <person name="Chang C.-H."/>
            <person name="Tsai H.-C."/>
            <person name="Liao T.-L."/>
            <person name="Liu Y.-M."/>
            <person name="Chen H.-J."/>
            <person name="Shen A.B.-T."/>
            <person name="Li J.-C."/>
            <person name="Su T.-L."/>
            <person name="Shao C.-P."/>
            <person name="Lee C.-T."/>
            <person name="Hor L.-I."/>
            <person name="Tsai S.-F."/>
        </authorList>
    </citation>
    <scope>NUCLEOTIDE SEQUENCE [LARGE SCALE GENOMIC DNA]</scope>
    <source>
        <strain>YJ016</strain>
    </source>
</reference>